<accession>Q8STD6</accession>
<dbReference type="EMBL" id="AL590447">
    <property type="protein sequence ID" value="CAD25719.1"/>
    <property type="molecule type" value="Genomic_DNA"/>
</dbReference>
<dbReference type="EMBL" id="AL590449">
    <property type="protein sequence ID" value="CAD25722.1"/>
    <property type="molecule type" value="Genomic_DNA"/>
</dbReference>
<dbReference type="RefSeq" id="NP_586115.1">
    <property type="nucleotide sequence ID" value="NM_001041737.1"/>
</dbReference>
<dbReference type="RefSeq" id="NP_586118.1">
    <property type="nucleotide sequence ID" value="NM_001041951.1"/>
</dbReference>
<dbReference type="STRING" id="284813.Q8STD6"/>
<dbReference type="GeneID" id="859549"/>
<dbReference type="GeneID" id="859764"/>
<dbReference type="KEGG" id="ecu:ECU07_1880"/>
<dbReference type="KEGG" id="ecu:ECU10_0020"/>
<dbReference type="VEuPathDB" id="MicrosporidiaDB:ECU07_1880"/>
<dbReference type="VEuPathDB" id="MicrosporidiaDB:ECU10_0020"/>
<dbReference type="HOGENOM" id="CLU_118192_0_0_1"/>
<dbReference type="InParanoid" id="Q8STD6"/>
<dbReference type="OrthoDB" id="14677at6029"/>
<dbReference type="Proteomes" id="UP000000819">
    <property type="component" value="Chromosome VII"/>
</dbReference>
<dbReference type="Proteomes" id="UP000000819">
    <property type="component" value="Chromosome X"/>
</dbReference>
<reference key="1">
    <citation type="journal article" date="2001" name="Nature">
        <title>Genome sequence and gene compaction of the eukaryote parasite Encephalitozoon cuniculi.</title>
        <authorList>
            <person name="Katinka M.D."/>
            <person name="Duprat S."/>
            <person name="Cornillot E."/>
            <person name="Metenier G."/>
            <person name="Thomarat F."/>
            <person name="Prensier G."/>
            <person name="Barbe V."/>
            <person name="Peyretaillade E."/>
            <person name="Brottier P."/>
            <person name="Wincker P."/>
            <person name="Delbac F."/>
            <person name="El Alaoui H."/>
            <person name="Peyret P."/>
            <person name="Saurin W."/>
            <person name="Gouy M."/>
            <person name="Weissenbach J."/>
            <person name="Vivares C.P."/>
        </authorList>
    </citation>
    <scope>NUCLEOTIDE SEQUENCE [LARGE SCALE GENOMIC DNA]</scope>
    <source>
        <strain>GB-M1</strain>
    </source>
</reference>
<feature type="chain" id="PRO_0000223173" description="UPF0329 protein ECU07_1880/ECU10_0020">
    <location>
        <begin position="1"/>
        <end position="211"/>
    </location>
</feature>
<protein>
    <recommendedName>
        <fullName>UPF0329 protein ECU07_1880/ECU10_0020</fullName>
    </recommendedName>
</protein>
<evidence type="ECO:0000305" key="1"/>
<organism>
    <name type="scientific">Encephalitozoon cuniculi (strain GB-M1)</name>
    <name type="common">Microsporidian parasite</name>
    <dbReference type="NCBI Taxonomy" id="284813"/>
    <lineage>
        <taxon>Eukaryota</taxon>
        <taxon>Fungi</taxon>
        <taxon>Fungi incertae sedis</taxon>
        <taxon>Microsporidia</taxon>
        <taxon>Unikaryonidae</taxon>
        <taxon>Encephalitozoon</taxon>
    </lineage>
</organism>
<proteinExistence type="inferred from homology"/>
<comment type="similarity">
    <text evidence="1">Belongs to the UPF0329 family.</text>
</comment>
<name>Y7I8_ENCCU</name>
<gene>
    <name type="ordered locus">ECU07_1880</name>
</gene>
<gene>
    <name type="ordered locus">ECU10_0020</name>
</gene>
<keyword id="KW-1185">Reference proteome</keyword>
<sequence length="211" mass="23693">MIGRMVGLEPSSRSGVLEECRECRAIVMKGDGVQTPLHKGDSILGGEGACLMRYAAWTLISAVDVVYCSLETRESVSLTFNPDGQVIVVPFMFKGYNIAALPTTKFGDLKKDTKQIENVVSFLRSDICYAVWEFLVSSVQYKDDDRFERLFDERMRGYLRNISEGTSKVYMRGNKTFSELLEMVCGRMLECSGRVAGGGHSKIWKRCHENA</sequence>